<evidence type="ECO:0000255" key="1">
    <source>
        <dbReference type="HAMAP-Rule" id="MF_00362"/>
    </source>
</evidence>
<evidence type="ECO:0000305" key="2"/>
<keyword id="KW-1185">Reference proteome</keyword>
<keyword id="KW-0687">Ribonucleoprotein</keyword>
<keyword id="KW-0689">Ribosomal protein</keyword>
<keyword id="KW-0694">RNA-binding</keyword>
<keyword id="KW-0699">rRNA-binding</keyword>
<protein>
    <recommendedName>
        <fullName evidence="1">Large ribosomal subunit protein uL10</fullName>
    </recommendedName>
    <alternativeName>
        <fullName evidence="2">50S ribosomal protein L10</fullName>
    </alternativeName>
</protein>
<proteinExistence type="inferred from homology"/>
<accession>A6Q1M1</accession>
<gene>
    <name evidence="1" type="primary">rplJ</name>
    <name type="ordered locus">NIS_0266</name>
</gene>
<comment type="function">
    <text evidence="1">Forms part of the ribosomal stalk, playing a central role in the interaction of the ribosome with GTP-bound translation factors.</text>
</comment>
<comment type="subunit">
    <text evidence="1">Part of the ribosomal stalk of the 50S ribosomal subunit. The N-terminus interacts with L11 and the large rRNA to form the base of the stalk. The C-terminus forms an elongated spine to which L12 dimers bind in a sequential fashion forming a multimeric L10(L12)X complex.</text>
</comment>
<comment type="similarity">
    <text evidence="1">Belongs to the universal ribosomal protein uL10 family.</text>
</comment>
<feature type="chain" id="PRO_1000005546" description="Large ribosomal subunit protein uL10">
    <location>
        <begin position="1"/>
        <end position="170"/>
    </location>
</feature>
<name>RL10_NITSB</name>
<organism>
    <name type="scientific">Nitratiruptor sp. (strain SB155-2)</name>
    <dbReference type="NCBI Taxonomy" id="387092"/>
    <lineage>
        <taxon>Bacteria</taxon>
        <taxon>Pseudomonadati</taxon>
        <taxon>Campylobacterota</taxon>
        <taxon>Epsilonproteobacteria</taxon>
        <taxon>Nautiliales</taxon>
        <taxon>Nitratiruptoraceae</taxon>
        <taxon>Nitratiruptor</taxon>
    </lineage>
</organism>
<sequence length="170" mass="19459">MTRSQKEEVVQYLTEEFKNAAAIVDCDYKGMSVSELESLRRIAKEKGLKVRVVKNTLAMIALRNNGVEDFQLKDTNVLIWGDDLVELAKTVTDFAKEHKENFQIKQGYFEGEVADASKIEAYSKLPSKEELLGMLLSVWTAPIRNLLYVWNAPKQNFVTVLENIRQQKES</sequence>
<dbReference type="EMBL" id="AP009178">
    <property type="protein sequence ID" value="BAF69380.1"/>
    <property type="molecule type" value="Genomic_DNA"/>
</dbReference>
<dbReference type="RefSeq" id="WP_012081643.1">
    <property type="nucleotide sequence ID" value="NC_009662.1"/>
</dbReference>
<dbReference type="SMR" id="A6Q1M1"/>
<dbReference type="FunCoup" id="A6Q1M1">
    <property type="interactions" value="497"/>
</dbReference>
<dbReference type="STRING" id="387092.NIS_0266"/>
<dbReference type="KEGG" id="nis:NIS_0266"/>
<dbReference type="eggNOG" id="COG0244">
    <property type="taxonomic scope" value="Bacteria"/>
</dbReference>
<dbReference type="HOGENOM" id="CLU_092227_2_2_7"/>
<dbReference type="InParanoid" id="A6Q1M1"/>
<dbReference type="OrthoDB" id="3186107at2"/>
<dbReference type="Proteomes" id="UP000001118">
    <property type="component" value="Chromosome"/>
</dbReference>
<dbReference type="GO" id="GO:0015934">
    <property type="term" value="C:large ribosomal subunit"/>
    <property type="evidence" value="ECO:0007669"/>
    <property type="project" value="InterPro"/>
</dbReference>
<dbReference type="GO" id="GO:0070180">
    <property type="term" value="F:large ribosomal subunit rRNA binding"/>
    <property type="evidence" value="ECO:0007669"/>
    <property type="project" value="UniProtKB-UniRule"/>
</dbReference>
<dbReference type="GO" id="GO:0003735">
    <property type="term" value="F:structural constituent of ribosome"/>
    <property type="evidence" value="ECO:0007669"/>
    <property type="project" value="InterPro"/>
</dbReference>
<dbReference type="GO" id="GO:0006412">
    <property type="term" value="P:translation"/>
    <property type="evidence" value="ECO:0007669"/>
    <property type="project" value="UniProtKB-UniRule"/>
</dbReference>
<dbReference type="CDD" id="cd05797">
    <property type="entry name" value="Ribosomal_L10"/>
    <property type="match status" value="1"/>
</dbReference>
<dbReference type="Gene3D" id="3.30.70.1730">
    <property type="match status" value="1"/>
</dbReference>
<dbReference type="Gene3D" id="6.10.250.290">
    <property type="match status" value="1"/>
</dbReference>
<dbReference type="HAMAP" id="MF_00362">
    <property type="entry name" value="Ribosomal_uL10"/>
    <property type="match status" value="1"/>
</dbReference>
<dbReference type="InterPro" id="IPR001790">
    <property type="entry name" value="Ribosomal_uL10"/>
</dbReference>
<dbReference type="InterPro" id="IPR043141">
    <property type="entry name" value="Ribosomal_uL10-like_sf"/>
</dbReference>
<dbReference type="InterPro" id="IPR022973">
    <property type="entry name" value="Ribosomal_uL10_bac"/>
</dbReference>
<dbReference type="InterPro" id="IPR047865">
    <property type="entry name" value="Ribosomal_uL10_bac_type"/>
</dbReference>
<dbReference type="InterPro" id="IPR002363">
    <property type="entry name" value="Ribosomal_uL10_CS_bac"/>
</dbReference>
<dbReference type="NCBIfam" id="NF000955">
    <property type="entry name" value="PRK00099.1-1"/>
    <property type="match status" value="1"/>
</dbReference>
<dbReference type="PANTHER" id="PTHR11560">
    <property type="entry name" value="39S RIBOSOMAL PROTEIN L10, MITOCHONDRIAL"/>
    <property type="match status" value="1"/>
</dbReference>
<dbReference type="Pfam" id="PF00466">
    <property type="entry name" value="Ribosomal_L10"/>
    <property type="match status" value="1"/>
</dbReference>
<dbReference type="SUPFAM" id="SSF160369">
    <property type="entry name" value="Ribosomal protein L10-like"/>
    <property type="match status" value="1"/>
</dbReference>
<dbReference type="PROSITE" id="PS01109">
    <property type="entry name" value="RIBOSOMAL_L10"/>
    <property type="match status" value="1"/>
</dbReference>
<reference key="1">
    <citation type="journal article" date="2007" name="Proc. Natl. Acad. Sci. U.S.A.">
        <title>Deep-sea vent epsilon-proteobacterial genomes provide insights into emergence of pathogens.</title>
        <authorList>
            <person name="Nakagawa S."/>
            <person name="Takaki Y."/>
            <person name="Shimamura S."/>
            <person name="Reysenbach A.-L."/>
            <person name="Takai K."/>
            <person name="Horikoshi K."/>
        </authorList>
    </citation>
    <scope>NUCLEOTIDE SEQUENCE [LARGE SCALE GENOMIC DNA]</scope>
    <source>
        <strain>SB155-2</strain>
    </source>
</reference>